<organism>
    <name type="scientific">Galinsoga quadriradiata</name>
    <name type="common">Shaggy soldier</name>
    <name type="synonym">Peruvian daisy</name>
    <dbReference type="NCBI Taxonomy" id="183030"/>
    <lineage>
        <taxon>Eukaryota</taxon>
        <taxon>Viridiplantae</taxon>
        <taxon>Streptophyta</taxon>
        <taxon>Embryophyta</taxon>
        <taxon>Tracheophyta</taxon>
        <taxon>Spermatophyta</taxon>
        <taxon>Magnoliopsida</taxon>
        <taxon>eudicotyledons</taxon>
        <taxon>Gunneridae</taxon>
        <taxon>Pentapetalae</taxon>
        <taxon>asterids</taxon>
        <taxon>campanulids</taxon>
        <taxon>Asterales</taxon>
        <taxon>Asteraceae</taxon>
        <taxon>Asteroideae</taxon>
        <taxon>Heliantheae alliance</taxon>
        <taxon>Millerieae</taxon>
        <taxon>Galinsoga</taxon>
    </lineage>
</organism>
<keyword id="KW-0004">4Fe-4S</keyword>
<keyword id="KW-0150">Chloroplast</keyword>
<keyword id="KW-0408">Iron</keyword>
<keyword id="KW-0411">Iron-sulfur</keyword>
<keyword id="KW-0472">Membrane</keyword>
<keyword id="KW-0479">Metal-binding</keyword>
<keyword id="KW-0520">NAD</keyword>
<keyword id="KW-0521">NADP</keyword>
<keyword id="KW-0934">Plastid</keyword>
<keyword id="KW-0618">Plastoquinone</keyword>
<keyword id="KW-0874">Quinone</keyword>
<keyword id="KW-0677">Repeat</keyword>
<keyword id="KW-0793">Thylakoid</keyword>
<keyword id="KW-1278">Translocase</keyword>
<geneLocation type="chloroplast"/>
<name>NDHI_GALQU</name>
<reference key="1">
    <citation type="submission" date="2003-01" db="EMBL/GenBank/DDBJ databases">
        <title>Chloroplast DNA phylogeny of tribe Heliantheae (Asteraceae).</title>
        <authorList>
            <person name="Panero J.L."/>
            <person name="Baldwin B.G."/>
            <person name="Schilling E.E."/>
            <person name="Clevinger J.A."/>
        </authorList>
    </citation>
    <scope>NUCLEOTIDE SEQUENCE [GENOMIC DNA]</scope>
</reference>
<feature type="chain" id="PRO_0000250792" description="NAD(P)H-quinone oxidoreductase subunit I, chloroplastic">
    <location>
        <begin position="1"/>
        <end position="166"/>
    </location>
</feature>
<feature type="domain" description="4Fe-4S ferredoxin-type 1" evidence="1">
    <location>
        <begin position="55"/>
        <end position="84"/>
    </location>
</feature>
<feature type="domain" description="4Fe-4S ferredoxin-type 2" evidence="1">
    <location>
        <begin position="95"/>
        <end position="124"/>
    </location>
</feature>
<feature type="binding site" evidence="1">
    <location>
        <position position="64"/>
    </location>
    <ligand>
        <name>[4Fe-4S] cluster</name>
        <dbReference type="ChEBI" id="CHEBI:49883"/>
        <label>1</label>
    </ligand>
</feature>
<feature type="binding site" evidence="1">
    <location>
        <position position="67"/>
    </location>
    <ligand>
        <name>[4Fe-4S] cluster</name>
        <dbReference type="ChEBI" id="CHEBI:49883"/>
        <label>1</label>
    </ligand>
</feature>
<feature type="binding site" evidence="1">
    <location>
        <position position="70"/>
    </location>
    <ligand>
        <name>[4Fe-4S] cluster</name>
        <dbReference type="ChEBI" id="CHEBI:49883"/>
        <label>1</label>
    </ligand>
</feature>
<feature type="binding site" evidence="1">
    <location>
        <position position="74"/>
    </location>
    <ligand>
        <name>[4Fe-4S] cluster</name>
        <dbReference type="ChEBI" id="CHEBI:49883"/>
        <label>2</label>
    </ligand>
</feature>
<feature type="binding site" evidence="1">
    <location>
        <position position="104"/>
    </location>
    <ligand>
        <name>[4Fe-4S] cluster</name>
        <dbReference type="ChEBI" id="CHEBI:49883"/>
        <label>2</label>
    </ligand>
</feature>
<feature type="binding site" evidence="1">
    <location>
        <position position="107"/>
    </location>
    <ligand>
        <name>[4Fe-4S] cluster</name>
        <dbReference type="ChEBI" id="CHEBI:49883"/>
        <label>2</label>
    </ligand>
</feature>
<feature type="binding site" evidence="1">
    <location>
        <position position="110"/>
    </location>
    <ligand>
        <name>[4Fe-4S] cluster</name>
        <dbReference type="ChEBI" id="CHEBI:49883"/>
        <label>2</label>
    </ligand>
</feature>
<feature type="binding site" evidence="1">
    <location>
        <position position="114"/>
    </location>
    <ligand>
        <name>[4Fe-4S] cluster</name>
        <dbReference type="ChEBI" id="CHEBI:49883"/>
        <label>1</label>
    </ligand>
</feature>
<dbReference type="EC" id="7.1.1.-" evidence="1"/>
<dbReference type="EMBL" id="AF383792">
    <property type="protein sequence ID" value="AAN61733.1"/>
    <property type="molecule type" value="Genomic_DNA"/>
</dbReference>
<dbReference type="RefSeq" id="YP_009318048.1">
    <property type="nucleotide sequence ID" value="NC_031853.1"/>
</dbReference>
<dbReference type="SMR" id="Q8HVS1"/>
<dbReference type="GeneID" id="30424326"/>
<dbReference type="GO" id="GO:0009535">
    <property type="term" value="C:chloroplast thylakoid membrane"/>
    <property type="evidence" value="ECO:0007669"/>
    <property type="project" value="UniProtKB-SubCell"/>
</dbReference>
<dbReference type="GO" id="GO:0051539">
    <property type="term" value="F:4 iron, 4 sulfur cluster binding"/>
    <property type="evidence" value="ECO:0007669"/>
    <property type="project" value="UniProtKB-KW"/>
</dbReference>
<dbReference type="GO" id="GO:0005506">
    <property type="term" value="F:iron ion binding"/>
    <property type="evidence" value="ECO:0007669"/>
    <property type="project" value="UniProtKB-UniRule"/>
</dbReference>
<dbReference type="GO" id="GO:0008137">
    <property type="term" value="F:NADH dehydrogenase (ubiquinone) activity"/>
    <property type="evidence" value="ECO:0007669"/>
    <property type="project" value="InterPro"/>
</dbReference>
<dbReference type="GO" id="GO:0048038">
    <property type="term" value="F:quinone binding"/>
    <property type="evidence" value="ECO:0007669"/>
    <property type="project" value="UniProtKB-KW"/>
</dbReference>
<dbReference type="GO" id="GO:0019684">
    <property type="term" value="P:photosynthesis, light reaction"/>
    <property type="evidence" value="ECO:0007669"/>
    <property type="project" value="UniProtKB-UniRule"/>
</dbReference>
<dbReference type="FunFam" id="3.30.70.3270:FF:000006">
    <property type="entry name" value="NAD(P)H-quinone oxidoreductase subunit I, chloroplastic"/>
    <property type="match status" value="1"/>
</dbReference>
<dbReference type="Gene3D" id="3.30.70.3270">
    <property type="match status" value="1"/>
</dbReference>
<dbReference type="HAMAP" id="MF_01351">
    <property type="entry name" value="NDH1_NuoI"/>
    <property type="match status" value="1"/>
</dbReference>
<dbReference type="InterPro" id="IPR017896">
    <property type="entry name" value="4Fe4S_Fe-S-bd"/>
</dbReference>
<dbReference type="InterPro" id="IPR017900">
    <property type="entry name" value="4Fe4S_Fe_S_CS"/>
</dbReference>
<dbReference type="InterPro" id="IPR010226">
    <property type="entry name" value="NADH_quinone_OxRdtase_chainI"/>
</dbReference>
<dbReference type="InterPro" id="IPR004497">
    <property type="entry name" value="NDHI"/>
</dbReference>
<dbReference type="NCBIfam" id="TIGR00403">
    <property type="entry name" value="ndhI"/>
    <property type="match status" value="1"/>
</dbReference>
<dbReference type="NCBIfam" id="TIGR01971">
    <property type="entry name" value="NuoI"/>
    <property type="match status" value="1"/>
</dbReference>
<dbReference type="NCBIfam" id="NF004537">
    <property type="entry name" value="PRK05888.1-3"/>
    <property type="match status" value="1"/>
</dbReference>
<dbReference type="PANTHER" id="PTHR47275">
    <property type="entry name" value="NAD(P)H-QUINONE OXIDOREDUCTASE SUBUNIT I, CHLOROPLASTIC"/>
    <property type="match status" value="1"/>
</dbReference>
<dbReference type="PANTHER" id="PTHR47275:SF1">
    <property type="entry name" value="NAD(P)H-QUINONE OXIDOREDUCTASE SUBUNIT I, CHLOROPLASTIC"/>
    <property type="match status" value="1"/>
</dbReference>
<dbReference type="Pfam" id="PF00037">
    <property type="entry name" value="Fer4"/>
    <property type="match status" value="2"/>
</dbReference>
<dbReference type="SUPFAM" id="SSF54862">
    <property type="entry name" value="4Fe-4S ferredoxins"/>
    <property type="match status" value="1"/>
</dbReference>
<dbReference type="PROSITE" id="PS00198">
    <property type="entry name" value="4FE4S_FER_1"/>
    <property type="match status" value="2"/>
</dbReference>
<dbReference type="PROSITE" id="PS51379">
    <property type="entry name" value="4FE4S_FER_2"/>
    <property type="match status" value="2"/>
</dbReference>
<protein>
    <recommendedName>
        <fullName evidence="1">NAD(P)H-quinone oxidoreductase subunit I, chloroplastic</fullName>
        <ecNumber evidence="1">7.1.1.-</ecNumber>
    </recommendedName>
    <alternativeName>
        <fullName evidence="1">NAD(P)H dehydrogenase subunit I</fullName>
        <shortName evidence="1">NDH subunit I</shortName>
    </alternativeName>
    <alternativeName>
        <fullName evidence="1">NADH-plastoquinone oxidoreductase subunit I</fullName>
    </alternativeName>
</protein>
<sequence length="166" mass="19475">MFPMVTEFMNYGQQTVRAARYIGQGFMITLSHANRLPVTIQYPYEKLITSERFRGRIHFEFDKCIACEVCVRVCPIDLPVVDWKLETDIRKKRLLNYSIDFGICIFCGNCVEYCPTNCLSMTEEYELSTYDRHELNYNQIALGRLPMSIIDDYTIRTILNLPEIKT</sequence>
<gene>
    <name evidence="1" type="primary">ndhI</name>
</gene>
<proteinExistence type="inferred from homology"/>
<comment type="function">
    <text evidence="1">NDH shuttles electrons from NAD(P)H:plastoquinone, via FMN and iron-sulfur (Fe-S) centers, to quinones in the photosynthetic chain and possibly in a chloroplast respiratory chain. The immediate electron acceptor for the enzyme in this species is believed to be plastoquinone. Couples the redox reaction to proton translocation, and thus conserves the redox energy in a proton gradient.</text>
</comment>
<comment type="catalytic activity">
    <reaction evidence="1">
        <text>a plastoquinone + NADH + (n+1) H(+)(in) = a plastoquinol + NAD(+) + n H(+)(out)</text>
        <dbReference type="Rhea" id="RHEA:42608"/>
        <dbReference type="Rhea" id="RHEA-COMP:9561"/>
        <dbReference type="Rhea" id="RHEA-COMP:9562"/>
        <dbReference type="ChEBI" id="CHEBI:15378"/>
        <dbReference type="ChEBI" id="CHEBI:17757"/>
        <dbReference type="ChEBI" id="CHEBI:57540"/>
        <dbReference type="ChEBI" id="CHEBI:57945"/>
        <dbReference type="ChEBI" id="CHEBI:62192"/>
    </reaction>
</comment>
<comment type="catalytic activity">
    <reaction evidence="1">
        <text>a plastoquinone + NADPH + (n+1) H(+)(in) = a plastoquinol + NADP(+) + n H(+)(out)</text>
        <dbReference type="Rhea" id="RHEA:42612"/>
        <dbReference type="Rhea" id="RHEA-COMP:9561"/>
        <dbReference type="Rhea" id="RHEA-COMP:9562"/>
        <dbReference type="ChEBI" id="CHEBI:15378"/>
        <dbReference type="ChEBI" id="CHEBI:17757"/>
        <dbReference type="ChEBI" id="CHEBI:57783"/>
        <dbReference type="ChEBI" id="CHEBI:58349"/>
        <dbReference type="ChEBI" id="CHEBI:62192"/>
    </reaction>
</comment>
<comment type="cofactor">
    <cofactor evidence="1">
        <name>[4Fe-4S] cluster</name>
        <dbReference type="ChEBI" id="CHEBI:49883"/>
    </cofactor>
    <text evidence="1">Binds 2 [4Fe-4S] clusters per subunit.</text>
</comment>
<comment type="subunit">
    <text evidence="1">NDH is composed of at least 16 different subunits, 5 of which are encoded in the nucleus.</text>
</comment>
<comment type="subcellular location">
    <subcellularLocation>
        <location evidence="1">Plastid</location>
        <location evidence="1">Chloroplast thylakoid membrane</location>
        <topology evidence="1">Peripheral membrane protein</topology>
    </subcellularLocation>
</comment>
<comment type="similarity">
    <text evidence="1">Belongs to the complex I 23 kDa subunit family.</text>
</comment>
<accession>Q8HVS1</accession>
<evidence type="ECO:0000255" key="1">
    <source>
        <dbReference type="HAMAP-Rule" id="MF_01351"/>
    </source>
</evidence>